<organism>
    <name type="scientific">Salmonella choleraesuis (strain SC-B67)</name>
    <dbReference type="NCBI Taxonomy" id="321314"/>
    <lineage>
        <taxon>Bacteria</taxon>
        <taxon>Pseudomonadati</taxon>
        <taxon>Pseudomonadota</taxon>
        <taxon>Gammaproteobacteria</taxon>
        <taxon>Enterobacterales</taxon>
        <taxon>Enterobacteriaceae</taxon>
        <taxon>Salmonella</taxon>
    </lineage>
</organism>
<feature type="propeptide" id="PRO_0000268017" evidence="1">
    <location>
        <begin position="1"/>
        <end position="14"/>
    </location>
</feature>
<feature type="chain" id="PRO_0000179642" description="ATP-dependent Clp protease proteolytic subunit">
    <location>
        <begin position="15"/>
        <end position="207"/>
    </location>
</feature>
<feature type="active site" description="Nucleophile" evidence="2">
    <location>
        <position position="111"/>
    </location>
</feature>
<feature type="active site" evidence="2">
    <location>
        <position position="136"/>
    </location>
</feature>
<evidence type="ECO:0000250" key="1"/>
<evidence type="ECO:0000255" key="2">
    <source>
        <dbReference type="HAMAP-Rule" id="MF_00444"/>
    </source>
</evidence>
<evidence type="ECO:0000305" key="3"/>
<name>CLPP_SALCH</name>
<reference key="1">
    <citation type="journal article" date="2005" name="Nucleic Acids Res.">
        <title>The genome sequence of Salmonella enterica serovar Choleraesuis, a highly invasive and resistant zoonotic pathogen.</title>
        <authorList>
            <person name="Chiu C.-H."/>
            <person name="Tang P."/>
            <person name="Chu C."/>
            <person name="Hu S."/>
            <person name="Bao Q."/>
            <person name="Yu J."/>
            <person name="Chou Y.-Y."/>
            <person name="Wang H.-S."/>
            <person name="Lee Y.-S."/>
        </authorList>
    </citation>
    <scope>NUCLEOTIDE SEQUENCE [LARGE SCALE GENOMIC DNA]</scope>
    <source>
        <strain>SC-B67</strain>
    </source>
</reference>
<gene>
    <name evidence="2" type="primary">clpP</name>
    <name type="ordered locus">SCH_0490</name>
</gene>
<proteinExistence type="inferred from homology"/>
<comment type="function">
    <text evidence="2">Cleaves peptides in various proteins in a process that requires ATP hydrolysis. Has a chymotrypsin-like activity. Plays a major role in the degradation of misfolded proteins.</text>
</comment>
<comment type="catalytic activity">
    <reaction evidence="2">
        <text>Hydrolysis of proteins to small peptides in the presence of ATP and magnesium. alpha-casein is the usual test substrate. In the absence of ATP, only oligopeptides shorter than five residues are hydrolyzed (such as succinyl-Leu-Tyr-|-NHMec, and Leu-Tyr-Leu-|-Tyr-Trp, in which cleavage of the -Tyr-|-Leu- and -Tyr-|-Trp bonds also occurs).</text>
        <dbReference type="EC" id="3.4.21.92"/>
    </reaction>
</comment>
<comment type="subunit">
    <text evidence="2">Fourteen ClpP subunits assemble into 2 heptameric rings which stack back to back to give a disk-like structure with a central cavity, resembling the structure of eukaryotic proteasomes. Component of the ClpAP and ClpXP complexes.</text>
</comment>
<comment type="subcellular location">
    <subcellularLocation>
        <location evidence="2">Cytoplasm</location>
    </subcellularLocation>
</comment>
<comment type="similarity">
    <text evidence="2">Belongs to the peptidase S14 family.</text>
</comment>
<comment type="sequence caution" evidence="3">
    <conflict type="erroneous initiation">
        <sequence resource="EMBL-CDS" id="AAX64396"/>
    </conflict>
</comment>
<dbReference type="EC" id="3.4.21.92" evidence="2"/>
<dbReference type="EMBL" id="AE017220">
    <property type="protein sequence ID" value="AAX64396.1"/>
    <property type="status" value="ALT_INIT"/>
    <property type="molecule type" value="Genomic_DNA"/>
</dbReference>
<dbReference type="RefSeq" id="WP_000122257.1">
    <property type="nucleotide sequence ID" value="NC_006905.1"/>
</dbReference>
<dbReference type="SMR" id="Q57SB5"/>
<dbReference type="MEROPS" id="S14.001"/>
<dbReference type="GeneID" id="66754911"/>
<dbReference type="KEGG" id="sec:SCH_0490"/>
<dbReference type="HOGENOM" id="CLU_058707_3_3_6"/>
<dbReference type="Proteomes" id="UP000000538">
    <property type="component" value="Chromosome"/>
</dbReference>
<dbReference type="GO" id="GO:0005737">
    <property type="term" value="C:cytoplasm"/>
    <property type="evidence" value="ECO:0007669"/>
    <property type="project" value="UniProtKB-SubCell"/>
</dbReference>
<dbReference type="GO" id="GO:0009368">
    <property type="term" value="C:endopeptidase Clp complex"/>
    <property type="evidence" value="ECO:0007669"/>
    <property type="project" value="TreeGrafter"/>
</dbReference>
<dbReference type="GO" id="GO:0004176">
    <property type="term" value="F:ATP-dependent peptidase activity"/>
    <property type="evidence" value="ECO:0007669"/>
    <property type="project" value="InterPro"/>
</dbReference>
<dbReference type="GO" id="GO:0051117">
    <property type="term" value="F:ATPase binding"/>
    <property type="evidence" value="ECO:0007669"/>
    <property type="project" value="TreeGrafter"/>
</dbReference>
<dbReference type="GO" id="GO:0004252">
    <property type="term" value="F:serine-type endopeptidase activity"/>
    <property type="evidence" value="ECO:0007669"/>
    <property type="project" value="UniProtKB-UniRule"/>
</dbReference>
<dbReference type="GO" id="GO:0006515">
    <property type="term" value="P:protein quality control for misfolded or incompletely synthesized proteins"/>
    <property type="evidence" value="ECO:0007669"/>
    <property type="project" value="TreeGrafter"/>
</dbReference>
<dbReference type="CDD" id="cd07017">
    <property type="entry name" value="S14_ClpP_2"/>
    <property type="match status" value="1"/>
</dbReference>
<dbReference type="FunFam" id="3.90.226.10:FF:000001">
    <property type="entry name" value="ATP-dependent Clp protease proteolytic subunit"/>
    <property type="match status" value="1"/>
</dbReference>
<dbReference type="Gene3D" id="3.90.226.10">
    <property type="entry name" value="2-enoyl-CoA Hydratase, Chain A, domain 1"/>
    <property type="match status" value="1"/>
</dbReference>
<dbReference type="HAMAP" id="MF_00444">
    <property type="entry name" value="ClpP"/>
    <property type="match status" value="1"/>
</dbReference>
<dbReference type="InterPro" id="IPR001907">
    <property type="entry name" value="ClpP"/>
</dbReference>
<dbReference type="InterPro" id="IPR029045">
    <property type="entry name" value="ClpP/crotonase-like_dom_sf"/>
</dbReference>
<dbReference type="InterPro" id="IPR023562">
    <property type="entry name" value="ClpP/TepA"/>
</dbReference>
<dbReference type="InterPro" id="IPR033135">
    <property type="entry name" value="ClpP_His_AS"/>
</dbReference>
<dbReference type="InterPro" id="IPR018215">
    <property type="entry name" value="ClpP_Ser_AS"/>
</dbReference>
<dbReference type="NCBIfam" id="TIGR00493">
    <property type="entry name" value="clpP"/>
    <property type="match status" value="1"/>
</dbReference>
<dbReference type="NCBIfam" id="NF001368">
    <property type="entry name" value="PRK00277.1"/>
    <property type="match status" value="1"/>
</dbReference>
<dbReference type="NCBIfam" id="NF009205">
    <property type="entry name" value="PRK12553.1"/>
    <property type="match status" value="1"/>
</dbReference>
<dbReference type="PANTHER" id="PTHR10381">
    <property type="entry name" value="ATP-DEPENDENT CLP PROTEASE PROTEOLYTIC SUBUNIT"/>
    <property type="match status" value="1"/>
</dbReference>
<dbReference type="PANTHER" id="PTHR10381:SF70">
    <property type="entry name" value="ATP-DEPENDENT CLP PROTEASE PROTEOLYTIC SUBUNIT"/>
    <property type="match status" value="1"/>
</dbReference>
<dbReference type="Pfam" id="PF00574">
    <property type="entry name" value="CLP_protease"/>
    <property type="match status" value="1"/>
</dbReference>
<dbReference type="PRINTS" id="PR00127">
    <property type="entry name" value="CLPPROTEASEP"/>
</dbReference>
<dbReference type="SUPFAM" id="SSF52096">
    <property type="entry name" value="ClpP/crotonase"/>
    <property type="match status" value="1"/>
</dbReference>
<dbReference type="PROSITE" id="PS00382">
    <property type="entry name" value="CLP_PROTEASE_HIS"/>
    <property type="match status" value="1"/>
</dbReference>
<dbReference type="PROSITE" id="PS00381">
    <property type="entry name" value="CLP_PROTEASE_SER"/>
    <property type="match status" value="1"/>
</dbReference>
<accession>Q57SB5</accession>
<keyword id="KW-0963">Cytoplasm</keyword>
<keyword id="KW-0378">Hydrolase</keyword>
<keyword id="KW-0645">Protease</keyword>
<keyword id="KW-0720">Serine protease</keyword>
<keyword id="KW-0865">Zymogen</keyword>
<sequence length="207" mass="23177">MSYSGERDNLAPHMALVPMVIEQTSRGERSFDIYSRLLKERVIFLTGQVEDHMANLIVAQMLFLEAENPEKDIYLYINSPGGVITAGMSIYDTMQFIKPDVSTICMGQAASMGAFLLTAGAKGKRFCLPNSRVMIHQPLGGYQGQATDIEIHAREILKVKGRMNELMAHHTGQSLEQIERDTERDRFLSAPEAVEYGLVDSILTHRN</sequence>
<protein>
    <recommendedName>
        <fullName evidence="2">ATP-dependent Clp protease proteolytic subunit</fullName>
        <ecNumber evidence="2">3.4.21.92</ecNumber>
    </recommendedName>
    <alternativeName>
        <fullName evidence="2">Endopeptidase Clp</fullName>
    </alternativeName>
</protein>